<organism>
    <name type="scientific">Arthroderma otae (strain ATCC MYA-4605 / CBS 113480)</name>
    <name type="common">Microsporum canis</name>
    <dbReference type="NCBI Taxonomy" id="554155"/>
    <lineage>
        <taxon>Eukaryota</taxon>
        <taxon>Fungi</taxon>
        <taxon>Dikarya</taxon>
        <taxon>Ascomycota</taxon>
        <taxon>Pezizomycotina</taxon>
        <taxon>Eurotiomycetes</taxon>
        <taxon>Eurotiomycetidae</taxon>
        <taxon>Onygenales</taxon>
        <taxon>Arthrodermataceae</taxon>
        <taxon>Microsporum</taxon>
    </lineage>
</organism>
<reference key="1">
    <citation type="journal article" date="2012" name="MBio">
        <title>Comparative genome analysis of Trichophyton rubrum and related dermatophytes reveals candidate genes involved in infection.</title>
        <authorList>
            <person name="Martinez D.A."/>
            <person name="Oliver B.G."/>
            <person name="Graeser Y."/>
            <person name="Goldberg J.M."/>
            <person name="Li W."/>
            <person name="Martinez-Rossi N.M."/>
            <person name="Monod M."/>
            <person name="Shelest E."/>
            <person name="Barton R.C."/>
            <person name="Birch E."/>
            <person name="Brakhage A.A."/>
            <person name="Chen Z."/>
            <person name="Gurr S.J."/>
            <person name="Heiman D."/>
            <person name="Heitman J."/>
            <person name="Kosti I."/>
            <person name="Rossi A."/>
            <person name="Saif S."/>
            <person name="Samalova M."/>
            <person name="Saunders C.W."/>
            <person name="Shea T."/>
            <person name="Summerbell R.C."/>
            <person name="Xu J."/>
            <person name="Young S."/>
            <person name="Zeng Q."/>
            <person name="Birren B.W."/>
            <person name="Cuomo C.A."/>
            <person name="White T.C."/>
        </authorList>
    </citation>
    <scope>NUCLEOTIDE SEQUENCE [LARGE SCALE GENOMIC DNA]</scope>
    <source>
        <strain>ATCC MYA-4605 / CBS 113480</strain>
    </source>
</reference>
<dbReference type="EC" id="3.1.-.-" evidence="1"/>
<dbReference type="EMBL" id="DS995708">
    <property type="protein sequence ID" value="EEQ35388.1"/>
    <property type="molecule type" value="Genomic_DNA"/>
</dbReference>
<dbReference type="RefSeq" id="XP_002843124.1">
    <property type="nucleotide sequence ID" value="XM_002843078.1"/>
</dbReference>
<dbReference type="SMR" id="C5FZT5"/>
<dbReference type="STRING" id="554155.C5FZT5"/>
<dbReference type="GeneID" id="9227559"/>
<dbReference type="VEuPathDB" id="FungiDB:MCYG_08207"/>
<dbReference type="eggNOG" id="KOG2519">
    <property type="taxonomic scope" value="Eukaryota"/>
</dbReference>
<dbReference type="HOGENOM" id="CLU_032444_1_1_1"/>
<dbReference type="OMA" id="MGIPWVQ"/>
<dbReference type="OrthoDB" id="1937206at2759"/>
<dbReference type="Proteomes" id="UP000002035">
    <property type="component" value="Unassembled WGS sequence"/>
</dbReference>
<dbReference type="GO" id="GO:0005739">
    <property type="term" value="C:mitochondrion"/>
    <property type="evidence" value="ECO:0007669"/>
    <property type="project" value="UniProtKB-SubCell"/>
</dbReference>
<dbReference type="GO" id="GO:0005730">
    <property type="term" value="C:nucleolus"/>
    <property type="evidence" value="ECO:0007669"/>
    <property type="project" value="UniProtKB-SubCell"/>
</dbReference>
<dbReference type="GO" id="GO:0005654">
    <property type="term" value="C:nucleoplasm"/>
    <property type="evidence" value="ECO:0007669"/>
    <property type="project" value="UniProtKB-SubCell"/>
</dbReference>
<dbReference type="GO" id="GO:0008409">
    <property type="term" value="F:5'-3' exonuclease activity"/>
    <property type="evidence" value="ECO:0007669"/>
    <property type="project" value="UniProtKB-UniRule"/>
</dbReference>
<dbReference type="GO" id="GO:0017108">
    <property type="term" value="F:5'-flap endonuclease activity"/>
    <property type="evidence" value="ECO:0007669"/>
    <property type="project" value="UniProtKB-UniRule"/>
</dbReference>
<dbReference type="GO" id="GO:0003677">
    <property type="term" value="F:DNA binding"/>
    <property type="evidence" value="ECO:0007669"/>
    <property type="project" value="UniProtKB-UniRule"/>
</dbReference>
<dbReference type="GO" id="GO:0000287">
    <property type="term" value="F:magnesium ion binding"/>
    <property type="evidence" value="ECO:0007669"/>
    <property type="project" value="UniProtKB-UniRule"/>
</dbReference>
<dbReference type="GO" id="GO:0006284">
    <property type="term" value="P:base-excision repair"/>
    <property type="evidence" value="ECO:0007669"/>
    <property type="project" value="UniProtKB-UniRule"/>
</dbReference>
<dbReference type="GO" id="GO:0043137">
    <property type="term" value="P:DNA replication, removal of RNA primer"/>
    <property type="evidence" value="ECO:0007669"/>
    <property type="project" value="UniProtKB-UniRule"/>
</dbReference>
<dbReference type="CDD" id="cd09907">
    <property type="entry name" value="H3TH_FEN1-Euk"/>
    <property type="match status" value="1"/>
</dbReference>
<dbReference type="CDD" id="cd09867">
    <property type="entry name" value="PIN_FEN1"/>
    <property type="match status" value="1"/>
</dbReference>
<dbReference type="FunFam" id="1.10.150.20:FF:000009">
    <property type="entry name" value="Flap endonuclease 1"/>
    <property type="match status" value="1"/>
</dbReference>
<dbReference type="FunFam" id="3.40.50.1010:FF:000003">
    <property type="entry name" value="Flap endonuclease 1"/>
    <property type="match status" value="1"/>
</dbReference>
<dbReference type="Gene3D" id="1.10.150.20">
    <property type="entry name" value="5' to 3' exonuclease, C-terminal subdomain"/>
    <property type="match status" value="1"/>
</dbReference>
<dbReference type="Gene3D" id="3.40.50.1010">
    <property type="entry name" value="5'-nuclease"/>
    <property type="match status" value="1"/>
</dbReference>
<dbReference type="HAMAP" id="MF_00614">
    <property type="entry name" value="Fen"/>
    <property type="match status" value="1"/>
</dbReference>
<dbReference type="InterPro" id="IPR036279">
    <property type="entry name" value="5-3_exonuclease_C_sf"/>
</dbReference>
<dbReference type="InterPro" id="IPR023426">
    <property type="entry name" value="Flap_endonuc"/>
</dbReference>
<dbReference type="InterPro" id="IPR008918">
    <property type="entry name" value="HhH2"/>
</dbReference>
<dbReference type="InterPro" id="IPR029060">
    <property type="entry name" value="PIN-like_dom_sf"/>
</dbReference>
<dbReference type="InterPro" id="IPR006086">
    <property type="entry name" value="XPG-I_dom"/>
</dbReference>
<dbReference type="InterPro" id="IPR006084">
    <property type="entry name" value="XPG/Rad2"/>
</dbReference>
<dbReference type="InterPro" id="IPR019974">
    <property type="entry name" value="XPG_CS"/>
</dbReference>
<dbReference type="InterPro" id="IPR006085">
    <property type="entry name" value="XPG_DNA_repair_N"/>
</dbReference>
<dbReference type="PANTHER" id="PTHR11081:SF9">
    <property type="entry name" value="FLAP ENDONUCLEASE 1"/>
    <property type="match status" value="1"/>
</dbReference>
<dbReference type="PANTHER" id="PTHR11081">
    <property type="entry name" value="FLAP ENDONUCLEASE FAMILY MEMBER"/>
    <property type="match status" value="1"/>
</dbReference>
<dbReference type="Pfam" id="PF00867">
    <property type="entry name" value="XPG_I"/>
    <property type="match status" value="1"/>
</dbReference>
<dbReference type="Pfam" id="PF00752">
    <property type="entry name" value="XPG_N"/>
    <property type="match status" value="1"/>
</dbReference>
<dbReference type="PRINTS" id="PR00853">
    <property type="entry name" value="XPGRADSUPER"/>
</dbReference>
<dbReference type="SMART" id="SM00279">
    <property type="entry name" value="HhH2"/>
    <property type="match status" value="1"/>
</dbReference>
<dbReference type="SMART" id="SM00484">
    <property type="entry name" value="XPGI"/>
    <property type="match status" value="1"/>
</dbReference>
<dbReference type="SMART" id="SM00485">
    <property type="entry name" value="XPGN"/>
    <property type="match status" value="1"/>
</dbReference>
<dbReference type="SUPFAM" id="SSF47807">
    <property type="entry name" value="5' to 3' exonuclease, C-terminal subdomain"/>
    <property type="match status" value="1"/>
</dbReference>
<dbReference type="SUPFAM" id="SSF88723">
    <property type="entry name" value="PIN domain-like"/>
    <property type="match status" value="1"/>
</dbReference>
<dbReference type="PROSITE" id="PS00841">
    <property type="entry name" value="XPG_1"/>
    <property type="match status" value="1"/>
</dbReference>
<dbReference type="PROSITE" id="PS00842">
    <property type="entry name" value="XPG_2"/>
    <property type="match status" value="1"/>
</dbReference>
<sequence>MGIKSLYQIISENAPDAIKAGEIKNQFGRKVAIDAYVKTAQRYRASTDEEQLTNESGETTSHLMGMFYRTLRMVDNGIKPLYVFDGAPPKLKSGELAKRTMRKAEAQEAAEEAKETGTAEDVEKFSRRTVRVTREHNAECKRLLKLMGIPYIDAPTEAEAQCAVLAKEGKVFGAASEDMDTLCFAAPVLLRHLTFSEQRKEPILEIHLDKVLEGLGMEMTQFVDLCILLGCDYLDPIPKVGPNTALKMIRDHGTLEKVVETIESDPKKKYVIPDDWPYLQARDLFFNPDVRPADAPECDFKWTAPDVEGLVRFLVEEKGFSEDRVRNGAARLTKNLKSAQQSRLEGFFKPVAKTEQQKATAKRKAEEKAELAKKKKKEDAKAKRAMGAKPRGAR</sequence>
<comment type="function">
    <text evidence="1">Structure-specific nuclease with 5'-flap endonuclease and 5'-3' exonuclease activities involved in DNA replication and repair. During DNA replication, cleaves the 5'-overhanging flap structure that is generated by displacement synthesis when DNA polymerase encounters the 5'-end of a downstream Okazaki fragment. It enters the flap from the 5'-end and then tracks to cleave the flap base, leaving a nick for ligation. Also involved in the long patch base excision repair (LP-BER) pathway, by cleaving within the apurinic/apyrimidinic (AP) site-terminated flap. Acts as a genome stabilization factor that prevents flaps from equilibrating into structures that lead to duplications and deletions. Also possesses 5'-3' exonuclease activity on nicked or gapped double-stranded DNA, and exhibits RNase H activity. Also involved in replication and repair of rDNA and in repairing mitochondrial DNA.</text>
</comment>
<comment type="cofactor">
    <cofactor evidence="1">
        <name>Mg(2+)</name>
        <dbReference type="ChEBI" id="CHEBI:18420"/>
    </cofactor>
    <text evidence="1">Binds 2 magnesium ions per subunit. They probably participate in the reaction catalyzed by the enzyme. May bind an additional third magnesium ion after substrate binding.</text>
</comment>
<comment type="subunit">
    <text evidence="1">Interacts with PCNA. Three molecules of FEN1 bind to one PCNA trimer with each molecule binding to one PCNA monomer. PCNA stimulates the nuclease activity without altering cleavage specificity.</text>
</comment>
<comment type="subcellular location">
    <subcellularLocation>
        <location evidence="1">Nucleus</location>
        <location evidence="1">Nucleolus</location>
    </subcellularLocation>
    <subcellularLocation>
        <location evidence="1">Nucleus</location>
        <location evidence="1">Nucleoplasm</location>
    </subcellularLocation>
    <subcellularLocation>
        <location evidence="1">Mitochondrion</location>
    </subcellularLocation>
    <text evidence="1">Resides mostly in the nucleoli and relocalizes to the nucleoplasm upon DNA damage.</text>
</comment>
<comment type="PTM">
    <text evidence="1">Phosphorylated. Phosphorylation upon DNA damage induces relocalization to the nuclear plasma.</text>
</comment>
<comment type="similarity">
    <text evidence="1">Belongs to the XPG/RAD2 endonuclease family. FEN1 subfamily.</text>
</comment>
<accession>C5FZT5</accession>
<keyword id="KW-0227">DNA damage</keyword>
<keyword id="KW-0234">DNA repair</keyword>
<keyword id="KW-0235">DNA replication</keyword>
<keyword id="KW-0255">Endonuclease</keyword>
<keyword id="KW-0269">Exonuclease</keyword>
<keyword id="KW-0378">Hydrolase</keyword>
<keyword id="KW-0460">Magnesium</keyword>
<keyword id="KW-0479">Metal-binding</keyword>
<keyword id="KW-0496">Mitochondrion</keyword>
<keyword id="KW-0540">Nuclease</keyword>
<keyword id="KW-0539">Nucleus</keyword>
<keyword id="KW-0597">Phosphoprotein</keyword>
<keyword id="KW-1185">Reference proteome</keyword>
<feature type="chain" id="PRO_0000403585" description="Flap endonuclease 1">
    <location>
        <begin position="1"/>
        <end position="394"/>
    </location>
</feature>
<feature type="region of interest" description="N-domain">
    <location>
        <begin position="1"/>
        <end position="103"/>
    </location>
</feature>
<feature type="region of interest" description="Disordered" evidence="2">
    <location>
        <begin position="102"/>
        <end position="123"/>
    </location>
</feature>
<feature type="region of interest" description="I-domain">
    <location>
        <begin position="121"/>
        <end position="252"/>
    </location>
</feature>
<feature type="region of interest" description="Interaction with PCNA" evidence="1">
    <location>
        <begin position="340"/>
        <end position="348"/>
    </location>
</feature>
<feature type="region of interest" description="Disordered" evidence="2">
    <location>
        <begin position="349"/>
        <end position="394"/>
    </location>
</feature>
<feature type="compositionally biased region" description="Basic and acidic residues" evidence="2">
    <location>
        <begin position="363"/>
        <end position="382"/>
    </location>
</feature>
<feature type="compositionally biased region" description="Basic residues" evidence="2">
    <location>
        <begin position="383"/>
        <end position="394"/>
    </location>
</feature>
<feature type="binding site" evidence="1">
    <location>
        <position position="34"/>
    </location>
    <ligand>
        <name>Mg(2+)</name>
        <dbReference type="ChEBI" id="CHEBI:18420"/>
        <label>1</label>
    </ligand>
</feature>
<feature type="binding site" evidence="1">
    <location>
        <position position="69"/>
    </location>
    <ligand>
        <name>DNA</name>
        <dbReference type="ChEBI" id="CHEBI:16991"/>
    </ligand>
</feature>
<feature type="binding site" evidence="1">
    <location>
        <position position="85"/>
    </location>
    <ligand>
        <name>Mg(2+)</name>
        <dbReference type="ChEBI" id="CHEBI:18420"/>
        <label>1</label>
    </ligand>
</feature>
<feature type="binding site" evidence="1">
    <location>
        <position position="157"/>
    </location>
    <ligand>
        <name>DNA</name>
        <dbReference type="ChEBI" id="CHEBI:16991"/>
    </ligand>
</feature>
<feature type="binding site" evidence="1">
    <location>
        <position position="157"/>
    </location>
    <ligand>
        <name>Mg(2+)</name>
        <dbReference type="ChEBI" id="CHEBI:18420"/>
        <label>1</label>
    </ligand>
</feature>
<feature type="binding site" evidence="1">
    <location>
        <position position="159"/>
    </location>
    <ligand>
        <name>Mg(2+)</name>
        <dbReference type="ChEBI" id="CHEBI:18420"/>
        <label>1</label>
    </ligand>
</feature>
<feature type="binding site" evidence="1">
    <location>
        <position position="178"/>
    </location>
    <ligand>
        <name>Mg(2+)</name>
        <dbReference type="ChEBI" id="CHEBI:18420"/>
        <label>2</label>
    </ligand>
</feature>
<feature type="binding site" evidence="1">
    <location>
        <position position="180"/>
    </location>
    <ligand>
        <name>Mg(2+)</name>
        <dbReference type="ChEBI" id="CHEBI:18420"/>
        <label>2</label>
    </ligand>
</feature>
<feature type="binding site" evidence="1">
    <location>
        <position position="230"/>
    </location>
    <ligand>
        <name>DNA</name>
        <dbReference type="ChEBI" id="CHEBI:16991"/>
    </ligand>
</feature>
<feature type="binding site" evidence="1">
    <location>
        <position position="232"/>
    </location>
    <ligand>
        <name>DNA</name>
        <dbReference type="ChEBI" id="CHEBI:16991"/>
    </ligand>
</feature>
<feature type="binding site" evidence="1">
    <location>
        <position position="232"/>
    </location>
    <ligand>
        <name>Mg(2+)</name>
        <dbReference type="ChEBI" id="CHEBI:18420"/>
        <label>2</label>
    </ligand>
</feature>
<gene>
    <name evidence="1" type="primary">FEN1</name>
    <name type="ORF">MCYG_08207</name>
</gene>
<evidence type="ECO:0000255" key="1">
    <source>
        <dbReference type="HAMAP-Rule" id="MF_03140"/>
    </source>
</evidence>
<evidence type="ECO:0000256" key="2">
    <source>
        <dbReference type="SAM" id="MobiDB-lite"/>
    </source>
</evidence>
<name>FEN1_ARTOC</name>
<proteinExistence type="inferred from homology"/>
<protein>
    <recommendedName>
        <fullName evidence="1">Flap endonuclease 1</fullName>
        <shortName evidence="1">FEN-1</shortName>
        <ecNumber evidence="1">3.1.-.-</ecNumber>
    </recommendedName>
    <alternativeName>
        <fullName evidence="1">Flap structure-specific endonuclease 1</fullName>
    </alternativeName>
</protein>